<comment type="function">
    <text evidence="1">The enzymes which catalyze the reversible phosphorolysis of pyrimidine nucleosides are involved in the degradation of these compounds and in their utilization as carbon and energy sources, or in the rescue of pyrimidine bases for nucleotide synthesis.</text>
</comment>
<comment type="catalytic activity">
    <reaction evidence="1">
        <text>thymidine + phosphate = 2-deoxy-alpha-D-ribose 1-phosphate + thymine</text>
        <dbReference type="Rhea" id="RHEA:16037"/>
        <dbReference type="ChEBI" id="CHEBI:17748"/>
        <dbReference type="ChEBI" id="CHEBI:17821"/>
        <dbReference type="ChEBI" id="CHEBI:43474"/>
        <dbReference type="ChEBI" id="CHEBI:57259"/>
        <dbReference type="EC" id="2.4.2.4"/>
    </reaction>
</comment>
<comment type="pathway">
    <text evidence="1">Pyrimidine metabolism; dTMP biosynthesis via salvage pathway; dTMP from thymine: step 1/2.</text>
</comment>
<comment type="subunit">
    <text evidence="1">Homodimer.</text>
</comment>
<comment type="similarity">
    <text evidence="1">Belongs to the thymidine/pyrimidine-nucleoside phosphorylase family.</text>
</comment>
<organism>
    <name type="scientific">Pectobacterium atrosepticum (strain SCRI 1043 / ATCC BAA-672)</name>
    <name type="common">Erwinia carotovora subsp. atroseptica</name>
    <dbReference type="NCBI Taxonomy" id="218491"/>
    <lineage>
        <taxon>Bacteria</taxon>
        <taxon>Pseudomonadati</taxon>
        <taxon>Pseudomonadota</taxon>
        <taxon>Gammaproteobacteria</taxon>
        <taxon>Enterobacterales</taxon>
        <taxon>Pectobacteriaceae</taxon>
        <taxon>Pectobacterium</taxon>
    </lineage>
</organism>
<dbReference type="EC" id="2.4.2.4" evidence="1"/>
<dbReference type="EMBL" id="BX950851">
    <property type="protein sequence ID" value="CAG73642.1"/>
    <property type="molecule type" value="Genomic_DNA"/>
</dbReference>
<dbReference type="RefSeq" id="WP_011092335.1">
    <property type="nucleotide sequence ID" value="NC_004547.2"/>
</dbReference>
<dbReference type="SMR" id="Q6D991"/>
<dbReference type="STRING" id="218491.ECA0728"/>
<dbReference type="KEGG" id="eca:ECA0728"/>
<dbReference type="PATRIC" id="fig|218491.5.peg.726"/>
<dbReference type="eggNOG" id="COG0213">
    <property type="taxonomic scope" value="Bacteria"/>
</dbReference>
<dbReference type="HOGENOM" id="CLU_025040_0_1_6"/>
<dbReference type="OrthoDB" id="9763887at2"/>
<dbReference type="UniPathway" id="UPA00578">
    <property type="reaction ID" value="UER00638"/>
</dbReference>
<dbReference type="Proteomes" id="UP000007966">
    <property type="component" value="Chromosome"/>
</dbReference>
<dbReference type="GO" id="GO:0005829">
    <property type="term" value="C:cytosol"/>
    <property type="evidence" value="ECO:0007669"/>
    <property type="project" value="TreeGrafter"/>
</dbReference>
<dbReference type="GO" id="GO:0004645">
    <property type="term" value="F:1,4-alpha-oligoglucan phosphorylase activity"/>
    <property type="evidence" value="ECO:0007669"/>
    <property type="project" value="InterPro"/>
</dbReference>
<dbReference type="GO" id="GO:0009032">
    <property type="term" value="F:thymidine phosphorylase activity"/>
    <property type="evidence" value="ECO:0007669"/>
    <property type="project" value="UniProtKB-UniRule"/>
</dbReference>
<dbReference type="GO" id="GO:0006206">
    <property type="term" value="P:pyrimidine nucleobase metabolic process"/>
    <property type="evidence" value="ECO:0007669"/>
    <property type="project" value="InterPro"/>
</dbReference>
<dbReference type="GO" id="GO:0046104">
    <property type="term" value="P:thymidine metabolic process"/>
    <property type="evidence" value="ECO:0007669"/>
    <property type="project" value="UniProtKB-UniRule"/>
</dbReference>
<dbReference type="FunFam" id="3.40.1030.10:FF:000001">
    <property type="entry name" value="Thymidine phosphorylase"/>
    <property type="match status" value="1"/>
</dbReference>
<dbReference type="FunFam" id="3.90.1170.30:FF:000001">
    <property type="entry name" value="Thymidine phosphorylase"/>
    <property type="match status" value="1"/>
</dbReference>
<dbReference type="Gene3D" id="3.40.1030.10">
    <property type="entry name" value="Nucleoside phosphorylase/phosphoribosyltransferase catalytic domain"/>
    <property type="match status" value="1"/>
</dbReference>
<dbReference type="Gene3D" id="3.90.1170.30">
    <property type="entry name" value="Pyrimidine nucleoside phosphorylase-like, C-terminal domain"/>
    <property type="match status" value="1"/>
</dbReference>
<dbReference type="Gene3D" id="1.20.970.10">
    <property type="entry name" value="Transferase, Pyrimidine Nucleoside Phosphorylase, Chain C"/>
    <property type="match status" value="1"/>
</dbReference>
<dbReference type="HAMAP" id="MF_01628">
    <property type="entry name" value="Thymid_phosp"/>
    <property type="match status" value="1"/>
</dbReference>
<dbReference type="InterPro" id="IPR000312">
    <property type="entry name" value="Glycosyl_Trfase_fam3"/>
</dbReference>
<dbReference type="InterPro" id="IPR017459">
    <property type="entry name" value="Glycosyl_Trfase_fam3_N_dom"/>
</dbReference>
<dbReference type="InterPro" id="IPR036320">
    <property type="entry name" value="Glycosyl_Trfase_fam3_N_dom_sf"/>
</dbReference>
<dbReference type="InterPro" id="IPR035902">
    <property type="entry name" value="Nuc_phospho_transferase"/>
</dbReference>
<dbReference type="InterPro" id="IPR036566">
    <property type="entry name" value="PYNP-like_C_sf"/>
</dbReference>
<dbReference type="InterPro" id="IPR013102">
    <property type="entry name" value="PYNP_C"/>
</dbReference>
<dbReference type="InterPro" id="IPR018090">
    <property type="entry name" value="Pyrmidine_PPas_bac/euk"/>
</dbReference>
<dbReference type="InterPro" id="IPR017872">
    <property type="entry name" value="Pyrmidine_PPase_CS"/>
</dbReference>
<dbReference type="InterPro" id="IPR000053">
    <property type="entry name" value="Thymidine/pyrmidine_PPase"/>
</dbReference>
<dbReference type="InterPro" id="IPR013465">
    <property type="entry name" value="Thymidine_Pase"/>
</dbReference>
<dbReference type="NCBIfam" id="NF004490">
    <property type="entry name" value="PRK05820.1"/>
    <property type="match status" value="1"/>
</dbReference>
<dbReference type="NCBIfam" id="TIGR02643">
    <property type="entry name" value="T_phosphoryl"/>
    <property type="match status" value="1"/>
</dbReference>
<dbReference type="NCBIfam" id="TIGR02644">
    <property type="entry name" value="Y_phosphoryl"/>
    <property type="match status" value="1"/>
</dbReference>
<dbReference type="PANTHER" id="PTHR10515">
    <property type="entry name" value="THYMIDINE PHOSPHORYLASE"/>
    <property type="match status" value="1"/>
</dbReference>
<dbReference type="PANTHER" id="PTHR10515:SF0">
    <property type="entry name" value="THYMIDINE PHOSPHORYLASE"/>
    <property type="match status" value="1"/>
</dbReference>
<dbReference type="Pfam" id="PF02885">
    <property type="entry name" value="Glycos_trans_3N"/>
    <property type="match status" value="1"/>
</dbReference>
<dbReference type="Pfam" id="PF00591">
    <property type="entry name" value="Glycos_transf_3"/>
    <property type="match status" value="1"/>
</dbReference>
<dbReference type="Pfam" id="PF07831">
    <property type="entry name" value="PYNP_C"/>
    <property type="match status" value="1"/>
</dbReference>
<dbReference type="PIRSF" id="PIRSF000478">
    <property type="entry name" value="TP_PyNP"/>
    <property type="match status" value="1"/>
</dbReference>
<dbReference type="SMART" id="SM00941">
    <property type="entry name" value="PYNP_C"/>
    <property type="match status" value="1"/>
</dbReference>
<dbReference type="SUPFAM" id="SSF52418">
    <property type="entry name" value="Nucleoside phosphorylase/phosphoribosyltransferase catalytic domain"/>
    <property type="match status" value="1"/>
</dbReference>
<dbReference type="SUPFAM" id="SSF47648">
    <property type="entry name" value="Nucleoside phosphorylase/phosphoribosyltransferase N-terminal domain"/>
    <property type="match status" value="1"/>
</dbReference>
<dbReference type="SUPFAM" id="SSF54680">
    <property type="entry name" value="Pyrimidine nucleoside phosphorylase C-terminal domain"/>
    <property type="match status" value="1"/>
</dbReference>
<dbReference type="PROSITE" id="PS00647">
    <property type="entry name" value="THYMID_PHOSPHORYLASE"/>
    <property type="match status" value="1"/>
</dbReference>
<feature type="chain" id="PRO_0000059053" description="Thymidine phosphorylase">
    <location>
        <begin position="1"/>
        <end position="442"/>
    </location>
</feature>
<reference key="1">
    <citation type="journal article" date="2004" name="Proc. Natl. Acad. Sci. U.S.A.">
        <title>Genome sequence of the enterobacterial phytopathogen Erwinia carotovora subsp. atroseptica and characterization of virulence factors.</title>
        <authorList>
            <person name="Bell K.S."/>
            <person name="Sebaihia M."/>
            <person name="Pritchard L."/>
            <person name="Holden M.T.G."/>
            <person name="Hyman L.J."/>
            <person name="Holeva M.C."/>
            <person name="Thomson N.R."/>
            <person name="Bentley S.D."/>
            <person name="Churcher L.J.C."/>
            <person name="Mungall K."/>
            <person name="Atkin R."/>
            <person name="Bason N."/>
            <person name="Brooks K."/>
            <person name="Chillingworth T."/>
            <person name="Clark K."/>
            <person name="Doggett J."/>
            <person name="Fraser A."/>
            <person name="Hance Z."/>
            <person name="Hauser H."/>
            <person name="Jagels K."/>
            <person name="Moule S."/>
            <person name="Norbertczak H."/>
            <person name="Ormond D."/>
            <person name="Price C."/>
            <person name="Quail M.A."/>
            <person name="Sanders M."/>
            <person name="Walker D."/>
            <person name="Whitehead S."/>
            <person name="Salmond G.P.C."/>
            <person name="Birch P.R.J."/>
            <person name="Parkhill J."/>
            <person name="Toth I.K."/>
        </authorList>
    </citation>
    <scope>NUCLEOTIDE SEQUENCE [LARGE SCALE GENOMIC DNA]</scope>
    <source>
        <strain>SCRI 1043 / ATCC BAA-672</strain>
    </source>
</reference>
<proteinExistence type="inferred from homology"/>
<sequence>MFLIQEIIRKKRDGKTLSEEEIRFFINGIRDNTVSEGQIAALAMTIYFHDMSMDERVALTLAMRDSGTVLNWKSLNLNGPLVDKHSTGGVGDVTSLMLGPMVAACGGYVPMISGRGLGHTGGTLDKLEAIPGLDIFPNDDHFRRIIQQVGVAIIGQTSSLAPADKRFYATRDITATVDSIPLITASILAKKLAEGLDALVMDVKVGSGAFMPTYELSEQLAQAIVGVANNAGCRTSALLTDMNQVLASSAGNALEVREAVRFLTGESRNPRLYDVTMALCGEMLLAGGLASSADDAHSRLQAVLDNGKAADVFGRMVAAQRGPGDFVEHYDRYLPVATLSKPVFATREGVVTAMDTRALGMAVVSLGGGRRQASDTIDYSVGLDSMISLGERVDAQRPLAVIHANTEAQWQQAANEVRAAIQLGDTAPEKTPMVYRRVSAEA</sequence>
<evidence type="ECO:0000255" key="1">
    <source>
        <dbReference type="HAMAP-Rule" id="MF_01628"/>
    </source>
</evidence>
<keyword id="KW-0328">Glycosyltransferase</keyword>
<keyword id="KW-1185">Reference proteome</keyword>
<keyword id="KW-0808">Transferase</keyword>
<accession>Q6D991</accession>
<protein>
    <recommendedName>
        <fullName evidence="1">Thymidine phosphorylase</fullName>
        <ecNumber evidence="1">2.4.2.4</ecNumber>
    </recommendedName>
    <alternativeName>
        <fullName evidence="1">TdRPase</fullName>
    </alternativeName>
</protein>
<gene>
    <name evidence="1" type="primary">deoA</name>
    <name type="ordered locus">ECA0728</name>
</gene>
<name>TYPH_PECAS</name>